<gene>
    <name type="primary">plsC</name>
</gene>
<keyword id="KW-0012">Acyltransferase</keyword>
<keyword id="KW-0997">Cell inner membrane</keyword>
<keyword id="KW-1003">Cell membrane</keyword>
<keyword id="KW-0444">Lipid biosynthesis</keyword>
<keyword id="KW-0443">Lipid metabolism</keyword>
<keyword id="KW-0472">Membrane</keyword>
<keyword id="KW-0594">Phospholipid biosynthesis</keyword>
<keyword id="KW-1208">Phospholipid metabolism</keyword>
<keyword id="KW-0808">Transferase</keyword>
<proteinExistence type="inferred from homology"/>
<reference key="1">
    <citation type="journal article" date="1995" name="Mol. Microbiol.">
        <title>Membrane glycerophospholipid biosynthesis in Neisseria meningitidis and Neisseria gonorrhoeae: identification, characterization, and mutagenesis of a lysophosphatidic acid acyltransferase.</title>
        <authorList>
            <person name="Swartley J.S."/>
            <person name="Balthazar J.T."/>
            <person name="Coleman J."/>
            <person name="Shafer W.M."/>
            <person name="Stephens D.S."/>
        </authorList>
    </citation>
    <scope>NUCLEOTIDE SEQUENCE [GENOMIC DNA]</scope>
    <source>
        <strain>FA19</strain>
    </source>
</reference>
<accession>Q59601</accession>
<name>PLSC_NEIGO</name>
<feature type="chain" id="PRO_0000208174" description="1-acyl-sn-glycerol-3-phosphate acyltransferase">
    <location>
        <begin position="1"/>
        <end position="255"/>
    </location>
</feature>
<feature type="short sequence motif" description="HXXXXD motif">
    <location>
        <begin position="78"/>
        <end position="83"/>
    </location>
</feature>
<evidence type="ECO:0000250" key="1"/>
<evidence type="ECO:0000305" key="2"/>
<sequence length="255" mass="27830">MSSNKASFFTRLRRLCRLTVWLFKTGKNLRGIDGGCPKSRNRAVIALGKGALAALDIGLEVGRPAPEHPNGVLVAANHVSWLDIFAMSAVYPSSFIAKQEIKSWPVLGKMGQNAGTVFINRNSRRDIEPINRAVCETLQRGQNVSFFPEARTSSGLGLLPFKAALFQSAIDAGAKVLAVALRYYDETGKRTARPSYADVGLPTCLWRIVSMKKLTIKVDFVCVADAAESEDRYALKDKIEESIRAVVADDADIAV</sequence>
<protein>
    <recommendedName>
        <fullName>1-acyl-sn-glycerol-3-phosphate acyltransferase</fullName>
        <shortName>1-AGP acyltransferase</shortName>
        <shortName>1-AGPAT</shortName>
        <ecNumber>2.3.1.51</ecNumber>
    </recommendedName>
    <alternativeName>
        <fullName>Lysophosphatidic acid acyltransferase</fullName>
        <shortName>LPAAT</shortName>
    </alternativeName>
</protein>
<organism>
    <name type="scientific">Neisseria gonorrhoeae</name>
    <dbReference type="NCBI Taxonomy" id="485"/>
    <lineage>
        <taxon>Bacteria</taxon>
        <taxon>Pseudomonadati</taxon>
        <taxon>Pseudomonadota</taxon>
        <taxon>Betaproteobacteria</taxon>
        <taxon>Neisseriales</taxon>
        <taxon>Neisseriaceae</taxon>
        <taxon>Neisseria</taxon>
    </lineage>
</organism>
<dbReference type="EC" id="2.3.1.51"/>
<dbReference type="EMBL" id="U21806">
    <property type="protein sequence ID" value="AAB40877.1"/>
    <property type="molecule type" value="Genomic_DNA"/>
</dbReference>
<dbReference type="PIR" id="S70545">
    <property type="entry name" value="S70545"/>
</dbReference>
<dbReference type="SMR" id="Q59601"/>
<dbReference type="BRENDA" id="2.3.1.51">
    <property type="organism ID" value="3590"/>
</dbReference>
<dbReference type="UniPathway" id="UPA00557">
    <property type="reaction ID" value="UER00613"/>
</dbReference>
<dbReference type="GO" id="GO:0005886">
    <property type="term" value="C:plasma membrane"/>
    <property type="evidence" value="ECO:0007669"/>
    <property type="project" value="UniProtKB-SubCell"/>
</dbReference>
<dbReference type="GO" id="GO:0003841">
    <property type="term" value="F:1-acylglycerol-3-phosphate O-acyltransferase activity"/>
    <property type="evidence" value="ECO:0007669"/>
    <property type="project" value="UniProtKB-EC"/>
</dbReference>
<dbReference type="GO" id="GO:0016024">
    <property type="term" value="P:CDP-diacylglycerol biosynthetic process"/>
    <property type="evidence" value="ECO:0007669"/>
    <property type="project" value="UniProtKB-UniPathway"/>
</dbReference>
<dbReference type="GO" id="GO:0006654">
    <property type="term" value="P:phosphatidic acid biosynthetic process"/>
    <property type="evidence" value="ECO:0007669"/>
    <property type="project" value="TreeGrafter"/>
</dbReference>
<dbReference type="CDD" id="cd07989">
    <property type="entry name" value="LPLAT_AGPAT-like"/>
    <property type="match status" value="1"/>
</dbReference>
<dbReference type="InterPro" id="IPR004552">
    <property type="entry name" value="AGP_acyltrans"/>
</dbReference>
<dbReference type="InterPro" id="IPR002123">
    <property type="entry name" value="Plipid/glycerol_acylTrfase"/>
</dbReference>
<dbReference type="NCBIfam" id="TIGR00530">
    <property type="entry name" value="AGP_acyltrn"/>
    <property type="match status" value="1"/>
</dbReference>
<dbReference type="PANTHER" id="PTHR10434">
    <property type="entry name" value="1-ACYL-SN-GLYCEROL-3-PHOSPHATE ACYLTRANSFERASE"/>
    <property type="match status" value="1"/>
</dbReference>
<dbReference type="PANTHER" id="PTHR10434:SF59">
    <property type="entry name" value="1-ACYL-SN-GLYCEROL-3-PHOSPHATE ACYLTRANSFERASE"/>
    <property type="match status" value="1"/>
</dbReference>
<dbReference type="Pfam" id="PF01553">
    <property type="entry name" value="Acyltransferase"/>
    <property type="match status" value="1"/>
</dbReference>
<dbReference type="SMART" id="SM00563">
    <property type="entry name" value="PlsC"/>
    <property type="match status" value="1"/>
</dbReference>
<dbReference type="SUPFAM" id="SSF69593">
    <property type="entry name" value="Glycerol-3-phosphate (1)-acyltransferase"/>
    <property type="match status" value="1"/>
</dbReference>
<comment type="function">
    <text>Converts lysophosphatidic acid (LPA) into phosphatidic acid by incorporating acyl moiety at the 2 position.</text>
</comment>
<comment type="catalytic activity">
    <reaction>
        <text>a 1-acyl-sn-glycero-3-phosphate + an acyl-CoA = a 1,2-diacyl-sn-glycero-3-phosphate + CoA</text>
        <dbReference type="Rhea" id="RHEA:19709"/>
        <dbReference type="ChEBI" id="CHEBI:57287"/>
        <dbReference type="ChEBI" id="CHEBI:57970"/>
        <dbReference type="ChEBI" id="CHEBI:58342"/>
        <dbReference type="ChEBI" id="CHEBI:58608"/>
        <dbReference type="EC" id="2.3.1.51"/>
    </reaction>
</comment>
<comment type="pathway">
    <text>Phospholipid metabolism; CDP-diacylglycerol biosynthesis; CDP-diacylglycerol from sn-glycerol 3-phosphate: step 2/3.</text>
</comment>
<comment type="subcellular location">
    <subcellularLocation>
        <location>Cell inner membrane</location>
        <topology>Peripheral membrane protein</topology>
    </subcellularLocation>
</comment>
<comment type="domain">
    <text evidence="1">The HXXXXD motif is essential for acyltransferase activity and may constitute the binding site for the phosphate moiety of the glycerol-3-phosphate.</text>
</comment>
<comment type="similarity">
    <text evidence="2">Belongs to the 1-acyl-sn-glycerol-3-phosphate acyltransferase family.</text>
</comment>